<keyword id="KW-1003">Cell membrane</keyword>
<keyword id="KW-0407">Ion channel</keyword>
<keyword id="KW-0406">Ion transport</keyword>
<keyword id="KW-0472">Membrane</keyword>
<keyword id="KW-0479">Metal-binding</keyword>
<keyword id="KW-0915">Sodium</keyword>
<keyword id="KW-0812">Transmembrane</keyword>
<keyword id="KW-1133">Transmembrane helix</keyword>
<keyword id="KW-0813">Transport</keyword>
<gene>
    <name evidence="1" type="primary">fluC1</name>
    <name evidence="1" type="synonym">crcB1</name>
    <name type="ordered locus">BCE_5216</name>
</gene>
<protein>
    <recommendedName>
        <fullName evidence="1">Fluoride-specific ion channel FluC 1</fullName>
    </recommendedName>
</protein>
<reference key="1">
    <citation type="journal article" date="2004" name="Nucleic Acids Res.">
        <title>The genome sequence of Bacillus cereus ATCC 10987 reveals metabolic adaptations and a large plasmid related to Bacillus anthracis pXO1.</title>
        <authorList>
            <person name="Rasko D.A."/>
            <person name="Ravel J."/>
            <person name="Oekstad O.A."/>
            <person name="Helgason E."/>
            <person name="Cer R.Z."/>
            <person name="Jiang L."/>
            <person name="Shores K.A."/>
            <person name="Fouts D.E."/>
            <person name="Tourasse N.J."/>
            <person name="Angiuoli S.V."/>
            <person name="Kolonay J.F."/>
            <person name="Nelson W.C."/>
            <person name="Kolstoe A.-B."/>
            <person name="Fraser C.M."/>
            <person name="Read T.D."/>
        </authorList>
    </citation>
    <scope>NUCLEOTIDE SEQUENCE [LARGE SCALE GENOMIC DNA]</scope>
    <source>
        <strain>ATCC 10987 / NRS 248</strain>
    </source>
</reference>
<evidence type="ECO:0000255" key="1">
    <source>
        <dbReference type="HAMAP-Rule" id="MF_00454"/>
    </source>
</evidence>
<sequence>MRKLIYIIVGIAGILGALSRYYLGLTIHEFWHHTFPLATLLINLVGCFLLAWLTTYIAQRNILPAEIITGIGTGFIGSFTTFSTFSVETIQLINHSEWSIAFLYVSCSILGGLIMSGLGYTLGDFLIKKHLTEGDHL</sequence>
<proteinExistence type="inferred from homology"/>
<name>FLUC1_BACC1</name>
<feature type="chain" id="PRO_0000110041" description="Fluoride-specific ion channel FluC 1">
    <location>
        <begin position="1"/>
        <end position="137"/>
    </location>
</feature>
<feature type="transmembrane region" description="Helical" evidence="1">
    <location>
        <begin position="4"/>
        <end position="24"/>
    </location>
</feature>
<feature type="transmembrane region" description="Helical" evidence="1">
    <location>
        <begin position="37"/>
        <end position="57"/>
    </location>
</feature>
<feature type="transmembrane region" description="Helical" evidence="1">
    <location>
        <begin position="62"/>
        <end position="82"/>
    </location>
</feature>
<feature type="transmembrane region" description="Helical" evidence="1">
    <location>
        <begin position="100"/>
        <end position="120"/>
    </location>
</feature>
<feature type="binding site" evidence="1">
    <location>
        <position position="77"/>
    </location>
    <ligand>
        <name>Na(+)</name>
        <dbReference type="ChEBI" id="CHEBI:29101"/>
        <note>structural</note>
    </ligand>
</feature>
<feature type="binding site" evidence="1">
    <location>
        <position position="80"/>
    </location>
    <ligand>
        <name>Na(+)</name>
        <dbReference type="ChEBI" id="CHEBI:29101"/>
        <note>structural</note>
    </ligand>
</feature>
<comment type="function">
    <text evidence="1">Fluoride-specific ion channel. Important for reducing fluoride concentration in the cell, thus reducing its toxicity.</text>
</comment>
<comment type="catalytic activity">
    <reaction evidence="1">
        <text>fluoride(in) = fluoride(out)</text>
        <dbReference type="Rhea" id="RHEA:76159"/>
        <dbReference type="ChEBI" id="CHEBI:17051"/>
    </reaction>
    <physiologicalReaction direction="left-to-right" evidence="1">
        <dbReference type="Rhea" id="RHEA:76160"/>
    </physiologicalReaction>
</comment>
<comment type="activity regulation">
    <text evidence="1">Na(+) is not transported, but it plays an essential structural role and its presence is essential for fluoride channel function.</text>
</comment>
<comment type="subcellular location">
    <subcellularLocation>
        <location evidence="1">Cell membrane</location>
        <topology evidence="1">Multi-pass membrane protein</topology>
    </subcellularLocation>
</comment>
<comment type="similarity">
    <text evidence="1">Belongs to the fluoride channel Fluc/FEX (TC 1.A.43) family.</text>
</comment>
<dbReference type="EMBL" id="AE017194">
    <property type="protein sequence ID" value="AAS44117.1"/>
    <property type="molecule type" value="Genomic_DNA"/>
</dbReference>
<dbReference type="SMR" id="P61386"/>
<dbReference type="KEGG" id="bca:BCE_5216"/>
<dbReference type="HOGENOM" id="CLU_114342_1_2_9"/>
<dbReference type="Proteomes" id="UP000002527">
    <property type="component" value="Chromosome"/>
</dbReference>
<dbReference type="GO" id="GO:0005886">
    <property type="term" value="C:plasma membrane"/>
    <property type="evidence" value="ECO:0007669"/>
    <property type="project" value="UniProtKB-SubCell"/>
</dbReference>
<dbReference type="GO" id="GO:0062054">
    <property type="term" value="F:fluoride channel activity"/>
    <property type="evidence" value="ECO:0007669"/>
    <property type="project" value="UniProtKB-UniRule"/>
</dbReference>
<dbReference type="GO" id="GO:0046872">
    <property type="term" value="F:metal ion binding"/>
    <property type="evidence" value="ECO:0007669"/>
    <property type="project" value="UniProtKB-KW"/>
</dbReference>
<dbReference type="GO" id="GO:0140114">
    <property type="term" value="P:cellular detoxification of fluoride"/>
    <property type="evidence" value="ECO:0007669"/>
    <property type="project" value="UniProtKB-UniRule"/>
</dbReference>
<dbReference type="HAMAP" id="MF_00454">
    <property type="entry name" value="FluC"/>
    <property type="match status" value="1"/>
</dbReference>
<dbReference type="InterPro" id="IPR003691">
    <property type="entry name" value="FluC"/>
</dbReference>
<dbReference type="NCBIfam" id="TIGR00494">
    <property type="entry name" value="crcB"/>
    <property type="match status" value="1"/>
</dbReference>
<dbReference type="PANTHER" id="PTHR28259">
    <property type="entry name" value="FLUORIDE EXPORT PROTEIN 1-RELATED"/>
    <property type="match status" value="1"/>
</dbReference>
<dbReference type="PANTHER" id="PTHR28259:SF1">
    <property type="entry name" value="FLUORIDE EXPORT PROTEIN 1-RELATED"/>
    <property type="match status" value="1"/>
</dbReference>
<dbReference type="Pfam" id="PF02537">
    <property type="entry name" value="CRCB"/>
    <property type="match status" value="1"/>
</dbReference>
<organism>
    <name type="scientific">Bacillus cereus (strain ATCC 10987 / NRS 248)</name>
    <dbReference type="NCBI Taxonomy" id="222523"/>
    <lineage>
        <taxon>Bacteria</taxon>
        <taxon>Bacillati</taxon>
        <taxon>Bacillota</taxon>
        <taxon>Bacilli</taxon>
        <taxon>Bacillales</taxon>
        <taxon>Bacillaceae</taxon>
        <taxon>Bacillus</taxon>
        <taxon>Bacillus cereus group</taxon>
    </lineage>
</organism>
<accession>P61386</accession>